<keyword id="KW-0010">Activator</keyword>
<keyword id="KW-0539">Nucleus</keyword>
<keyword id="KW-1185">Reference proteome</keyword>
<keyword id="KW-0678">Repressor</keyword>
<keyword id="KW-0804">Transcription</keyword>
<keyword id="KW-0805">Transcription regulation</keyword>
<protein>
    <recommendedName>
        <fullName>Mediator of RNA polymerase II transcription subunit 12</fullName>
    </recommendedName>
    <alternativeName>
        <fullName>Mediator complex subunit 12</fullName>
    </alternativeName>
</protein>
<evidence type="ECO:0000250" key="1"/>
<evidence type="ECO:0000256" key="2">
    <source>
        <dbReference type="SAM" id="MobiDB-lite"/>
    </source>
</evidence>
<evidence type="ECO:0000305" key="3"/>
<comment type="function">
    <text evidence="1">Component of the SRB8-11 complex. The SRB8-11 complex is a regulatory module of the Mediator complex which is itself involved in regulation of basal and activated RNA polymerase II-dependent transcription. The SRB8-11 complex may be involved in the transcriptional repression of a subset of genes regulated by Mediator. It may inhibit the association of the Mediator complex with RNA polymerase II to form the holoenzyme complex (By similarity).</text>
</comment>
<comment type="subunit">
    <text evidence="1">Component of the SRB8-11 complex, which itself associates with the Mediator complex.</text>
</comment>
<comment type="subcellular location">
    <subcellularLocation>
        <location evidence="3">Nucleus</location>
    </subcellularLocation>
</comment>
<comment type="similarity">
    <text evidence="3">Belongs to the Mediator complex subunit 12 family.</text>
</comment>
<dbReference type="EMBL" id="CM003143">
    <property type="protein sequence ID" value="KIS70033.1"/>
    <property type="molecule type" value="Genomic_DNA"/>
</dbReference>
<dbReference type="RefSeq" id="XP_011388176.1">
    <property type="nucleotide sequence ID" value="XM_011389874.1"/>
</dbReference>
<dbReference type="STRING" id="237631.Q4P456"/>
<dbReference type="EnsemblFungi" id="KIS70033">
    <property type="protein sequence ID" value="KIS70033"/>
    <property type="gene ID" value="UMAG_05107"/>
</dbReference>
<dbReference type="GeneID" id="23565086"/>
<dbReference type="KEGG" id="uma:UMAG_05107"/>
<dbReference type="VEuPathDB" id="FungiDB:UMAG_05107"/>
<dbReference type="eggNOG" id="KOG4522">
    <property type="taxonomic scope" value="Eukaryota"/>
</dbReference>
<dbReference type="HOGENOM" id="CLU_237111_0_0_1"/>
<dbReference type="InParanoid" id="Q4P456"/>
<dbReference type="OMA" id="VSTEDWD"/>
<dbReference type="OrthoDB" id="20828at2759"/>
<dbReference type="Proteomes" id="UP000000561">
    <property type="component" value="Chromosome 4"/>
</dbReference>
<dbReference type="GO" id="GO:0016592">
    <property type="term" value="C:mediator complex"/>
    <property type="evidence" value="ECO:0000318"/>
    <property type="project" value="GO_Central"/>
</dbReference>
<dbReference type="GO" id="GO:0003713">
    <property type="term" value="F:transcription coactivator activity"/>
    <property type="evidence" value="ECO:0000318"/>
    <property type="project" value="GO_Central"/>
</dbReference>
<dbReference type="GO" id="GO:0045944">
    <property type="term" value="P:positive regulation of transcription by RNA polymerase II"/>
    <property type="evidence" value="ECO:0000318"/>
    <property type="project" value="GO_Central"/>
</dbReference>
<dbReference type="InterPro" id="IPR019035">
    <property type="entry name" value="Mediator_Med12"/>
</dbReference>
<dbReference type="InterPro" id="IPR021990">
    <property type="entry name" value="Mediator_Med12_LCEWAV"/>
</dbReference>
<dbReference type="PANTHER" id="PTHR46567">
    <property type="entry name" value="MEDIATOR OF RNA POLYMERASE II TRANSCRIPTION SUBUNIT 12"/>
    <property type="match status" value="1"/>
</dbReference>
<dbReference type="PANTHER" id="PTHR46567:SF1">
    <property type="entry name" value="MEDIATOR OF RNA POLYMERASE II TRANSCRIPTION SUBUNIT 12"/>
    <property type="match status" value="1"/>
</dbReference>
<dbReference type="Pfam" id="PF09497">
    <property type="entry name" value="Med12"/>
    <property type="match status" value="1"/>
</dbReference>
<dbReference type="Pfam" id="PF12145">
    <property type="entry name" value="Med12-LCEWAV"/>
    <property type="match status" value="1"/>
</dbReference>
<dbReference type="SMART" id="SM01281">
    <property type="entry name" value="Med12"/>
    <property type="match status" value="1"/>
</dbReference>
<organism>
    <name type="scientific">Mycosarcoma maydis</name>
    <name type="common">Corn smut fungus</name>
    <name type="synonym">Ustilago maydis</name>
    <dbReference type="NCBI Taxonomy" id="5270"/>
    <lineage>
        <taxon>Eukaryota</taxon>
        <taxon>Fungi</taxon>
        <taxon>Dikarya</taxon>
        <taxon>Basidiomycota</taxon>
        <taxon>Ustilaginomycotina</taxon>
        <taxon>Ustilaginomycetes</taxon>
        <taxon>Ustilaginales</taxon>
        <taxon>Ustilaginaceae</taxon>
        <taxon>Mycosarcoma</taxon>
    </lineage>
</organism>
<feature type="chain" id="PRO_0000312978" description="Mediator of RNA polymerase II transcription subunit 12">
    <location>
        <begin position="1"/>
        <end position="1876"/>
    </location>
</feature>
<feature type="region of interest" description="Disordered" evidence="2">
    <location>
        <begin position="1"/>
        <end position="75"/>
    </location>
</feature>
<feature type="region of interest" description="Disordered" evidence="2">
    <location>
        <begin position="291"/>
        <end position="314"/>
    </location>
</feature>
<feature type="region of interest" description="Disordered" evidence="2">
    <location>
        <begin position="715"/>
        <end position="737"/>
    </location>
</feature>
<feature type="region of interest" description="Disordered" evidence="2">
    <location>
        <begin position="1373"/>
        <end position="1405"/>
    </location>
</feature>
<feature type="region of interest" description="Disordered" evidence="2">
    <location>
        <begin position="1801"/>
        <end position="1876"/>
    </location>
</feature>
<feature type="compositionally biased region" description="Low complexity" evidence="2">
    <location>
        <begin position="1"/>
        <end position="10"/>
    </location>
</feature>
<feature type="compositionally biased region" description="Basic and acidic residues" evidence="2">
    <location>
        <begin position="1373"/>
        <end position="1387"/>
    </location>
</feature>
<feature type="compositionally biased region" description="Low complexity" evidence="2">
    <location>
        <begin position="1394"/>
        <end position="1405"/>
    </location>
</feature>
<feature type="compositionally biased region" description="Basic residues" evidence="2">
    <location>
        <begin position="1867"/>
        <end position="1876"/>
    </location>
</feature>
<proteinExistence type="inferred from homology"/>
<reference key="1">
    <citation type="journal article" date="2006" name="Nature">
        <title>Insights from the genome of the biotrophic fungal plant pathogen Ustilago maydis.</title>
        <authorList>
            <person name="Kaemper J."/>
            <person name="Kahmann R."/>
            <person name="Boelker M."/>
            <person name="Ma L.-J."/>
            <person name="Brefort T."/>
            <person name="Saville B.J."/>
            <person name="Banuett F."/>
            <person name="Kronstad J.W."/>
            <person name="Gold S.E."/>
            <person name="Mueller O."/>
            <person name="Perlin M.H."/>
            <person name="Woesten H.A.B."/>
            <person name="de Vries R."/>
            <person name="Ruiz-Herrera J."/>
            <person name="Reynaga-Pena C.G."/>
            <person name="Snetselaar K."/>
            <person name="McCann M."/>
            <person name="Perez-Martin J."/>
            <person name="Feldbruegge M."/>
            <person name="Basse C.W."/>
            <person name="Steinberg G."/>
            <person name="Ibeas J.I."/>
            <person name="Holloman W."/>
            <person name="Guzman P."/>
            <person name="Farman M.L."/>
            <person name="Stajich J.E."/>
            <person name="Sentandreu R."/>
            <person name="Gonzalez-Prieto J.M."/>
            <person name="Kennell J.C."/>
            <person name="Molina L."/>
            <person name="Schirawski J."/>
            <person name="Mendoza-Mendoza A."/>
            <person name="Greilinger D."/>
            <person name="Muench K."/>
            <person name="Roessel N."/>
            <person name="Scherer M."/>
            <person name="Vranes M."/>
            <person name="Ladendorf O."/>
            <person name="Vincon V."/>
            <person name="Fuchs U."/>
            <person name="Sandrock B."/>
            <person name="Meng S."/>
            <person name="Ho E.C.H."/>
            <person name="Cahill M.J."/>
            <person name="Boyce K.J."/>
            <person name="Klose J."/>
            <person name="Klosterman S.J."/>
            <person name="Deelstra H.J."/>
            <person name="Ortiz-Castellanos L."/>
            <person name="Li W."/>
            <person name="Sanchez-Alonso P."/>
            <person name="Schreier P.H."/>
            <person name="Haeuser-Hahn I."/>
            <person name="Vaupel M."/>
            <person name="Koopmann E."/>
            <person name="Friedrich G."/>
            <person name="Voss H."/>
            <person name="Schlueter T."/>
            <person name="Margolis J."/>
            <person name="Platt D."/>
            <person name="Swimmer C."/>
            <person name="Gnirke A."/>
            <person name="Chen F."/>
            <person name="Vysotskaia V."/>
            <person name="Mannhaupt G."/>
            <person name="Gueldener U."/>
            <person name="Muensterkoetter M."/>
            <person name="Haase D."/>
            <person name="Oesterheld M."/>
            <person name="Mewes H.-W."/>
            <person name="Mauceli E.W."/>
            <person name="DeCaprio D."/>
            <person name="Wade C.M."/>
            <person name="Butler J."/>
            <person name="Young S.K."/>
            <person name="Jaffe D.B."/>
            <person name="Calvo S.E."/>
            <person name="Nusbaum C."/>
            <person name="Galagan J.E."/>
            <person name="Birren B.W."/>
        </authorList>
    </citation>
    <scope>NUCLEOTIDE SEQUENCE [LARGE SCALE GENOMIC DNA]</scope>
    <source>
        <strain>DSM 14603 / FGSC 9021 / UM521</strain>
    </source>
</reference>
<reference key="2">
    <citation type="submission" date="2014-09" db="EMBL/GenBank/DDBJ databases">
        <authorList>
            <person name="Gueldener U."/>
            <person name="Muensterkoetter M."/>
            <person name="Walter M.C."/>
            <person name="Mannhaupt G."/>
            <person name="Kahmann R."/>
        </authorList>
    </citation>
    <scope>GENOME REANNOTATION</scope>
    <source>
        <strain>DSM 14603 / FGSC 9021 / UM521</strain>
    </source>
</reference>
<name>SRB8_MYCMD</name>
<sequence>MLRSGAASASSGGGRGPSSSLSSVKRSKHDDTRLPEAYQQERPPWRPPLHPTAARRHVPDLFPTKSGQPEDDMSQISVRKGFAPRTYVHNEYFCAHDAIHTRLLSPDALDTLSDWMDEVMQRRRELDRASIATNQYKPPSRVTLNDAKLANYVKDLADPTVPLMRLSRSVPHGFRGEKLFEMLWVGGALPSTATAATTTVNYFHSRIAGPPSASSASASASASASTSAPRKSVDIPRAVWFIRALGAAELSSLRNKSAATIIPEITSNLCAWMAKQVAELNLVHTAESNSTATASPAPVSPSTHLPRTPSAAPSSLSRSVAAAHFARTPSNLNPASSPSLAPAKEVCYVLQNDADEERWIAKWSYSLSLARHLHAQNLLDRSVLVRWIVDAFSASNLVQLPFLLELVQEVLLLVLRRRCFVKPFLTALLVQIPNVDARLDPSSSGGLRTKLVLLFRIVCENSPESLISPRLWFEHSASLTQLLNELNAETPLPLSHQAFEFVEQTVRPRVDRLLLRPHSGNTTQNASLETQETLSSPLQHHLDIQALDSFDMTTIDRVFLQNTSATHRYAKHDRDDTVWATRIDTILTWACTDRRSGVVRQYLAATLIEKIRFGVPWEESSEETDQVSLPAFDLEHNTTKTRKINVEPMLIKWLGDVETSLNQKLDESSTQTRVSLLATVDVGAIVVLLGELARRGVFSYTKYLQRLIARGMTAPSASSATEQHQNPDGSVQTPSSVSASRDSLHLRLLRSLPLYDQPASVYQQRRQAIYGDRTKETYEDAAQRRALRQLQSFLPFAFAQEVQAEASRIAVSPSPSTPDPVHALSRLWSASRFVRCRLFRSELLPAVTARVERLNGDQLSQISAVLVMADDFEGLAQLLATLLLRPLSDNLARAAFNMVIEYSLVWRSMDIMATLNQLVRQQLNHSSSIRNDRQAVMASTTLLRLRTLIENVPSRISASALDPGADHDALQQHVQALRPNVDALLDRFAKLTRSSVESDGSIASSSTPVEGSDMLTPFRSLFVQPDAMSDEMIERTIVDSVFARSDTSLVPSAVRLIDQLYLEASLEIDERHARWLSNLVLSIEQGTHSDASMKALLSLLTRLIAHGTLNLQLAMDTFLLPYLLSSVRRLTDPATRNTEVPMHIGSIVSSLGEIFASSLGETVPATSYEDMRAFGAQTKLLFAQVNLPSLLRAATCLISAFDETSTVPASEKAQIESFCNALLQSQPMQIAFRQEPRLCILAIKDTCKSMWGCNPSRVIDLAMACLDPTSLLLRDVGTIDAASVKNRLDGWDTAVVATELVEIFERLQLVESSFQTRADSKTKALASGIFDDLFVQLPDIGAQLVRDCQSSGLVSRFTDIGIKILSDKVKAASTDADKTPRRMDNSHKGMTNFGPDDGADAPAQAKTAADAAKHGPCVGEQQVESTLRSVVRMCEQQHSFIFNATDADSCAQLLLHVVTSLEDALGSMAAASHQDKVARLVTVLHGSMTFQLMHLVLRFGCLWNGTMRALALRLVKALLELTRQAGEKTECGGSFALLLDSLSFVLDELPPTLLSTCLPELETQLQTIELATQERSDKLQQLSFRLDNATTANAWLVASSAGAALKKGWFTSGGLNPWECAEYLEAPPAANPAAAGAAGAAGAAAGGNARAGVVETGRSGVNSRAAVESPGAVTVNDAETCNSLPGARTGWTGKLWLNTAIPLSMLGVRVTRDLVPNYASPASPGGVSVGSNDASSQPWTTGGGASAIGVGTCSAMDMDAKEALAALPMFVESERTYGERSAGEPAYSRDLRRGLLVEPNLPCRTRDERGETSQEPARATMDPAGAHTSVTSSATHDPSHVIDLTWDADEEMPLSTHPHHPAVATTSRKRRLSKRD</sequence>
<gene>
    <name type="primary">SRB8</name>
    <name type="synonym">MED12</name>
    <name type="ORF">UMAG_05107</name>
</gene>
<accession>Q4P456</accession>
<accession>A0A0D1CU85</accession>